<evidence type="ECO:0000250" key="1"/>
<evidence type="ECO:0000255" key="2">
    <source>
        <dbReference type="PROSITE-ProRule" id="PRU01024"/>
    </source>
</evidence>
<proteinExistence type="inferred from homology"/>
<feature type="chain" id="PRO_0000161993" description="Uncharacterized RNA methyltransferase LIC_11085">
    <location>
        <begin position="1"/>
        <end position="454"/>
    </location>
</feature>
<feature type="active site" description="Nucleophile" evidence="2">
    <location>
        <position position="408"/>
    </location>
</feature>
<feature type="binding site" evidence="1">
    <location>
        <position position="73"/>
    </location>
    <ligand>
        <name>[4Fe-4S] cluster</name>
        <dbReference type="ChEBI" id="CHEBI:49883"/>
    </ligand>
</feature>
<feature type="binding site" evidence="1">
    <location>
        <position position="79"/>
    </location>
    <ligand>
        <name>[4Fe-4S] cluster</name>
        <dbReference type="ChEBI" id="CHEBI:49883"/>
    </ligand>
</feature>
<feature type="binding site" evidence="1">
    <location>
        <position position="82"/>
    </location>
    <ligand>
        <name>[4Fe-4S] cluster</name>
        <dbReference type="ChEBI" id="CHEBI:49883"/>
    </ligand>
</feature>
<feature type="binding site" evidence="1">
    <location>
        <position position="154"/>
    </location>
    <ligand>
        <name>[4Fe-4S] cluster</name>
        <dbReference type="ChEBI" id="CHEBI:49883"/>
    </ligand>
</feature>
<feature type="binding site" evidence="2">
    <location>
        <position position="279"/>
    </location>
    <ligand>
        <name>S-adenosyl-L-methionine</name>
        <dbReference type="ChEBI" id="CHEBI:59789"/>
    </ligand>
</feature>
<feature type="binding site" evidence="2">
    <location>
        <position position="307"/>
    </location>
    <ligand>
        <name>S-adenosyl-L-methionine</name>
        <dbReference type="ChEBI" id="CHEBI:59789"/>
    </ligand>
</feature>
<feature type="binding site" evidence="2">
    <location>
        <position position="328"/>
    </location>
    <ligand>
        <name>S-adenosyl-L-methionine</name>
        <dbReference type="ChEBI" id="CHEBI:59789"/>
    </ligand>
</feature>
<feature type="binding site" evidence="2">
    <location>
        <position position="381"/>
    </location>
    <ligand>
        <name>S-adenosyl-L-methionine</name>
        <dbReference type="ChEBI" id="CHEBI:59789"/>
    </ligand>
</feature>
<gene>
    <name type="ordered locus">LIC_11085</name>
</gene>
<reference key="1">
    <citation type="journal article" date="2004" name="J. Bacteriol.">
        <title>Comparative genomics of two Leptospira interrogans serovars reveals novel insights into physiology and pathogenesis.</title>
        <authorList>
            <person name="Nascimento A.L.T.O."/>
            <person name="Ko A.I."/>
            <person name="Martins E.A.L."/>
            <person name="Monteiro-Vitorello C.B."/>
            <person name="Ho P.L."/>
            <person name="Haake D.A."/>
            <person name="Verjovski-Almeida S."/>
            <person name="Hartskeerl R.A."/>
            <person name="Marques M.V."/>
            <person name="Oliveira M.C."/>
            <person name="Menck C.F.M."/>
            <person name="Leite L.C.C."/>
            <person name="Carrer H."/>
            <person name="Coutinho L.L."/>
            <person name="Degrave W.M."/>
            <person name="Dellagostin O.A."/>
            <person name="El-Dorry H."/>
            <person name="Ferro E.S."/>
            <person name="Ferro M.I.T."/>
            <person name="Furlan L.R."/>
            <person name="Gamberini M."/>
            <person name="Giglioti E.A."/>
            <person name="Goes-Neto A."/>
            <person name="Goldman G.H."/>
            <person name="Goldman M.H.S."/>
            <person name="Harakava R."/>
            <person name="Jeronimo S.M.B."/>
            <person name="Junqueira-de-Azevedo I.L.M."/>
            <person name="Kimura E.T."/>
            <person name="Kuramae E.E."/>
            <person name="Lemos E.G.M."/>
            <person name="Lemos M.V.F."/>
            <person name="Marino C.L."/>
            <person name="Nunes L.R."/>
            <person name="de Oliveira R.C."/>
            <person name="Pereira G.G."/>
            <person name="Reis M.S."/>
            <person name="Schriefer A."/>
            <person name="Siqueira W.J."/>
            <person name="Sommer P."/>
            <person name="Tsai S.M."/>
            <person name="Simpson A.J.G."/>
            <person name="Ferro J.A."/>
            <person name="Camargo L.E.A."/>
            <person name="Kitajima J.P."/>
            <person name="Setubal J.C."/>
            <person name="Van Sluys M.A."/>
        </authorList>
    </citation>
    <scope>NUCLEOTIDE SEQUENCE [LARGE SCALE GENOMIC DNA]</scope>
    <source>
        <strain>Fiocruz L1-130</strain>
    </source>
</reference>
<sequence length="454" mass="52429">MLDKNTNLTHQSKIEFVNSNLRGIGFVNNTKIEVPYSLPGDVYNVTFFKKKRRKPSAKLELVSQTQRSFIPPCSAFTKCGGCCAQHISYQDQFRYKTSSLLESYKKDFEIVPTLYPAQKTFYYRNRMDFAVFPGPIVGQREAGSFRHIVDLETCLIQSKESNEELYRFRNLISKFPNLPYDRKSDSGFLKYFTLRKAKNTSELMTILTFVEEFKNTIEEKEFENVCLKSLKADHILFCFNRRKGEISATGEIKILKGMDSYKELVCGKEFRVPFDSFFQPNPEGFQPILDFIEKEIPDSFDHLVDLFCGSGFFSRIFAHKFLKITGIDSIESSLEIARKQMSLDFPKIDSSYLKVDLFSKHSSSKLKVLFSSSDKDVLIADPPRAGLGEFVLDALKDSKVSYFFYVSCNPTSQKSDLWKLKDFFQIQKILITDPYPQTPHLESVAFLKRKNFTT</sequence>
<comment type="similarity">
    <text evidence="2">Belongs to the class I-like SAM-binding methyltransferase superfamily. RNA M5U methyltransferase family.</text>
</comment>
<accession>Q72TD6</accession>
<name>Y1085_LEPIC</name>
<keyword id="KW-0004">4Fe-4S</keyword>
<keyword id="KW-0408">Iron</keyword>
<keyword id="KW-0411">Iron-sulfur</keyword>
<keyword id="KW-0479">Metal-binding</keyword>
<keyword id="KW-0489">Methyltransferase</keyword>
<keyword id="KW-0949">S-adenosyl-L-methionine</keyword>
<keyword id="KW-0808">Transferase</keyword>
<dbReference type="EC" id="2.1.1.-"/>
<dbReference type="EMBL" id="AE016823">
    <property type="protein sequence ID" value="AAS69692.1"/>
    <property type="molecule type" value="Genomic_DNA"/>
</dbReference>
<dbReference type="RefSeq" id="WP_000884773.1">
    <property type="nucleotide sequence ID" value="NC_005823.1"/>
</dbReference>
<dbReference type="SMR" id="Q72TD6"/>
<dbReference type="KEGG" id="lic:LIC_11085"/>
<dbReference type="HOGENOM" id="CLU_014689_8_1_12"/>
<dbReference type="Proteomes" id="UP000007037">
    <property type="component" value="Chromosome I"/>
</dbReference>
<dbReference type="GO" id="GO:0016020">
    <property type="term" value="C:membrane"/>
    <property type="evidence" value="ECO:0007669"/>
    <property type="project" value="InterPro"/>
</dbReference>
<dbReference type="GO" id="GO:0051539">
    <property type="term" value="F:4 iron, 4 sulfur cluster binding"/>
    <property type="evidence" value="ECO:0007669"/>
    <property type="project" value="UniProtKB-KW"/>
</dbReference>
<dbReference type="GO" id="GO:0008083">
    <property type="term" value="F:growth factor activity"/>
    <property type="evidence" value="ECO:0007669"/>
    <property type="project" value="InterPro"/>
</dbReference>
<dbReference type="GO" id="GO:0046872">
    <property type="term" value="F:metal ion binding"/>
    <property type="evidence" value="ECO:0007669"/>
    <property type="project" value="UniProtKB-KW"/>
</dbReference>
<dbReference type="GO" id="GO:0070041">
    <property type="term" value="F:rRNA (uridine-C5-)-methyltransferase activity"/>
    <property type="evidence" value="ECO:0007669"/>
    <property type="project" value="TreeGrafter"/>
</dbReference>
<dbReference type="GO" id="GO:0070475">
    <property type="term" value="P:rRNA base methylation"/>
    <property type="evidence" value="ECO:0007669"/>
    <property type="project" value="TreeGrafter"/>
</dbReference>
<dbReference type="CDD" id="cd02440">
    <property type="entry name" value="AdoMet_MTases"/>
    <property type="match status" value="1"/>
</dbReference>
<dbReference type="Gene3D" id="2.40.50.1070">
    <property type="match status" value="1"/>
</dbReference>
<dbReference type="Gene3D" id="2.40.50.140">
    <property type="entry name" value="Nucleic acid-binding proteins"/>
    <property type="match status" value="1"/>
</dbReference>
<dbReference type="Gene3D" id="3.40.50.150">
    <property type="entry name" value="Vaccinia Virus protein VP39"/>
    <property type="match status" value="1"/>
</dbReference>
<dbReference type="InterPro" id="IPR030390">
    <property type="entry name" value="MeTrfase_TrmA_AS"/>
</dbReference>
<dbReference type="InterPro" id="IPR012340">
    <property type="entry name" value="NA-bd_OB-fold"/>
</dbReference>
<dbReference type="InterPro" id="IPR000072">
    <property type="entry name" value="PDGF/VEGF_dom"/>
</dbReference>
<dbReference type="InterPro" id="IPR029063">
    <property type="entry name" value="SAM-dependent_MTases_sf"/>
</dbReference>
<dbReference type="InterPro" id="IPR010280">
    <property type="entry name" value="U5_MeTrfase_fam"/>
</dbReference>
<dbReference type="PANTHER" id="PTHR11061">
    <property type="entry name" value="RNA M5U METHYLTRANSFERASE"/>
    <property type="match status" value="1"/>
</dbReference>
<dbReference type="PANTHER" id="PTHR11061:SF30">
    <property type="entry name" value="TRNA (URACIL(54)-C(5))-METHYLTRANSFERASE"/>
    <property type="match status" value="1"/>
</dbReference>
<dbReference type="Pfam" id="PF05958">
    <property type="entry name" value="tRNA_U5-meth_tr"/>
    <property type="match status" value="1"/>
</dbReference>
<dbReference type="SUPFAM" id="SSF53335">
    <property type="entry name" value="S-adenosyl-L-methionine-dependent methyltransferases"/>
    <property type="match status" value="1"/>
</dbReference>
<dbReference type="PROSITE" id="PS51687">
    <property type="entry name" value="SAM_MT_RNA_M5U"/>
    <property type="match status" value="1"/>
</dbReference>
<dbReference type="PROSITE" id="PS01230">
    <property type="entry name" value="TRMA_1"/>
    <property type="match status" value="1"/>
</dbReference>
<organism>
    <name type="scientific">Leptospira interrogans serogroup Icterohaemorrhagiae serovar copenhageni (strain Fiocruz L1-130)</name>
    <dbReference type="NCBI Taxonomy" id="267671"/>
    <lineage>
        <taxon>Bacteria</taxon>
        <taxon>Pseudomonadati</taxon>
        <taxon>Spirochaetota</taxon>
        <taxon>Spirochaetia</taxon>
        <taxon>Leptospirales</taxon>
        <taxon>Leptospiraceae</taxon>
        <taxon>Leptospira</taxon>
    </lineage>
</organism>
<protein>
    <recommendedName>
        <fullName>Uncharacterized RNA methyltransferase LIC_11085</fullName>
        <ecNumber>2.1.1.-</ecNumber>
    </recommendedName>
</protein>